<protein>
    <recommendedName>
        <fullName evidence="1">Disulfide bond formation protein B</fullName>
    </recommendedName>
    <alternativeName>
        <fullName evidence="1">Disulfide oxidoreductase</fullName>
    </alternativeName>
</protein>
<evidence type="ECO:0000255" key="1">
    <source>
        <dbReference type="HAMAP-Rule" id="MF_00286"/>
    </source>
</evidence>
<feature type="chain" id="PRO_0000059349" description="Disulfide bond formation protein B">
    <location>
        <begin position="1"/>
        <end position="178"/>
    </location>
</feature>
<feature type="topological domain" description="Cytoplasmic" evidence="1">
    <location>
        <begin position="1"/>
        <end position="14"/>
    </location>
</feature>
<feature type="transmembrane region" description="Helical" evidence="1">
    <location>
        <begin position="15"/>
        <end position="31"/>
    </location>
</feature>
<feature type="topological domain" description="Periplasmic" evidence="1">
    <location>
        <begin position="32"/>
        <end position="49"/>
    </location>
</feature>
<feature type="transmembrane region" description="Helical" evidence="1">
    <location>
        <begin position="50"/>
        <end position="65"/>
    </location>
</feature>
<feature type="topological domain" description="Cytoplasmic" evidence="1">
    <location>
        <begin position="66"/>
        <end position="72"/>
    </location>
</feature>
<feature type="transmembrane region" description="Helical" evidence="1">
    <location>
        <begin position="73"/>
        <end position="90"/>
    </location>
</feature>
<feature type="topological domain" description="Periplasmic" evidence="1">
    <location>
        <begin position="91"/>
        <end position="145"/>
    </location>
</feature>
<feature type="transmembrane region" description="Helical" evidence="1">
    <location>
        <begin position="146"/>
        <end position="164"/>
    </location>
</feature>
<feature type="topological domain" description="Cytoplasmic" evidence="1">
    <location>
        <begin position="165"/>
        <end position="177"/>
    </location>
</feature>
<feature type="disulfide bond" description="Redox-active" evidence="1">
    <location>
        <begin position="41"/>
        <end position="44"/>
    </location>
</feature>
<feature type="disulfide bond" description="Redox-active" evidence="1">
    <location>
        <begin position="105"/>
        <end position="131"/>
    </location>
</feature>
<gene>
    <name evidence="1" type="primary">dsbB</name>
    <name type="ordered locus">PM0046</name>
</gene>
<organism>
    <name type="scientific">Pasteurella multocida (strain Pm70)</name>
    <dbReference type="NCBI Taxonomy" id="272843"/>
    <lineage>
        <taxon>Bacteria</taxon>
        <taxon>Pseudomonadati</taxon>
        <taxon>Pseudomonadota</taxon>
        <taxon>Gammaproteobacteria</taxon>
        <taxon>Pasteurellales</taxon>
        <taxon>Pasteurellaceae</taxon>
        <taxon>Pasteurella</taxon>
    </lineage>
</organism>
<proteinExistence type="inferred from homology"/>
<sequence>MLSFFKTLSTKRSAWFLLFSSALLLEAIALYFQHGMGLAPCVMCIYERVAILGIAFSGLLGLLYPSSMLLRLVALLIGLSSAIKGLMISITHLDLQLYPAPWKQCSAVAEFPETLPLDQWFPALFLPSGSCSEVTWQFLGFSMVQWIVVIFALYTLLLALIFISQVKRLKPKQRRLFH</sequence>
<reference key="1">
    <citation type="journal article" date="2000" name="Microb. Pathog.">
        <title>Identification of Pasteurella multocida virulence genes in a septicemic mouse model using signature-tagged mutagenesis.</title>
        <authorList>
            <person name="Fuller T.E."/>
            <person name="Kennedy M.J."/>
            <person name="Lowery D.E."/>
        </authorList>
    </citation>
    <scope>NUCLEOTIDE SEQUENCE [GENOMIC DNA]</scope>
</reference>
<reference key="2">
    <citation type="journal article" date="2001" name="Proc. Natl. Acad. Sci. U.S.A.">
        <title>Complete genomic sequence of Pasteurella multocida Pm70.</title>
        <authorList>
            <person name="May B.J."/>
            <person name="Zhang Q."/>
            <person name="Li L.L."/>
            <person name="Paustian M.L."/>
            <person name="Whittam T.S."/>
            <person name="Kapur V."/>
        </authorList>
    </citation>
    <scope>NUCLEOTIDE SEQUENCE [LARGE SCALE GENOMIC DNA]</scope>
    <source>
        <strain>Pm70</strain>
    </source>
</reference>
<name>DSBB_PASMU</name>
<dbReference type="EMBL" id="AF237925">
    <property type="protein sequence ID" value="AAF68411.1"/>
    <property type="molecule type" value="Genomic_DNA"/>
</dbReference>
<dbReference type="EMBL" id="AE004439">
    <property type="protein sequence ID" value="AAK02130.1"/>
    <property type="molecule type" value="Genomic_DNA"/>
</dbReference>
<dbReference type="RefSeq" id="WP_005724450.1">
    <property type="nucleotide sequence ID" value="NC_002663.1"/>
</dbReference>
<dbReference type="SMR" id="Q9L6B3"/>
<dbReference type="STRING" id="272843.PM0046"/>
<dbReference type="EnsemblBacteria" id="AAK02130">
    <property type="protein sequence ID" value="AAK02130"/>
    <property type="gene ID" value="PM0046"/>
</dbReference>
<dbReference type="GeneID" id="77207385"/>
<dbReference type="KEGG" id="pmu:PM0046"/>
<dbReference type="HOGENOM" id="CLU_098660_2_0_6"/>
<dbReference type="OrthoDB" id="3711263at2"/>
<dbReference type="Proteomes" id="UP000000809">
    <property type="component" value="Chromosome"/>
</dbReference>
<dbReference type="GO" id="GO:0005886">
    <property type="term" value="C:plasma membrane"/>
    <property type="evidence" value="ECO:0007669"/>
    <property type="project" value="UniProtKB-SubCell"/>
</dbReference>
<dbReference type="GO" id="GO:0009055">
    <property type="term" value="F:electron transfer activity"/>
    <property type="evidence" value="ECO:0007669"/>
    <property type="project" value="UniProtKB-UniRule"/>
</dbReference>
<dbReference type="GO" id="GO:0015035">
    <property type="term" value="F:protein-disulfide reductase activity"/>
    <property type="evidence" value="ECO:0007669"/>
    <property type="project" value="UniProtKB-UniRule"/>
</dbReference>
<dbReference type="GO" id="GO:0006457">
    <property type="term" value="P:protein folding"/>
    <property type="evidence" value="ECO:0007669"/>
    <property type="project" value="InterPro"/>
</dbReference>
<dbReference type="Gene3D" id="1.20.1550.10">
    <property type="entry name" value="DsbB-like"/>
    <property type="match status" value="1"/>
</dbReference>
<dbReference type="HAMAP" id="MF_00286">
    <property type="entry name" value="DsbB"/>
    <property type="match status" value="1"/>
</dbReference>
<dbReference type="InterPro" id="IPR003752">
    <property type="entry name" value="DiS_bond_form_DsbB/BdbC"/>
</dbReference>
<dbReference type="InterPro" id="IPR022920">
    <property type="entry name" value="Disulphide_bond_form_DsbB"/>
</dbReference>
<dbReference type="InterPro" id="IPR050183">
    <property type="entry name" value="DsbB"/>
</dbReference>
<dbReference type="InterPro" id="IPR023380">
    <property type="entry name" value="DsbB-like_sf"/>
</dbReference>
<dbReference type="NCBIfam" id="NF002485">
    <property type="entry name" value="PRK01749.1"/>
    <property type="match status" value="1"/>
</dbReference>
<dbReference type="PANTHER" id="PTHR36570">
    <property type="entry name" value="DISULFIDE BOND FORMATION PROTEIN B"/>
    <property type="match status" value="1"/>
</dbReference>
<dbReference type="PANTHER" id="PTHR36570:SF2">
    <property type="entry name" value="DISULFIDE BOND FORMATION PROTEIN B"/>
    <property type="match status" value="1"/>
</dbReference>
<dbReference type="Pfam" id="PF02600">
    <property type="entry name" value="DsbB"/>
    <property type="match status" value="1"/>
</dbReference>
<dbReference type="SUPFAM" id="SSF158442">
    <property type="entry name" value="DsbB-like"/>
    <property type="match status" value="1"/>
</dbReference>
<accession>Q9L6B3</accession>
<accession>P57804</accession>
<keyword id="KW-0997">Cell inner membrane</keyword>
<keyword id="KW-1003">Cell membrane</keyword>
<keyword id="KW-0143">Chaperone</keyword>
<keyword id="KW-1015">Disulfide bond</keyword>
<keyword id="KW-0249">Electron transport</keyword>
<keyword id="KW-0472">Membrane</keyword>
<keyword id="KW-0560">Oxidoreductase</keyword>
<keyword id="KW-0676">Redox-active center</keyword>
<keyword id="KW-1185">Reference proteome</keyword>
<keyword id="KW-0812">Transmembrane</keyword>
<keyword id="KW-1133">Transmembrane helix</keyword>
<keyword id="KW-0813">Transport</keyword>
<comment type="function">
    <text evidence="1">Required for disulfide bond formation in some periplasmic proteins. Acts by oxidizing the DsbA protein.</text>
</comment>
<comment type="subcellular location">
    <subcellularLocation>
        <location evidence="1">Cell inner membrane</location>
        <topology evidence="1">Multi-pass membrane protein</topology>
    </subcellularLocation>
</comment>
<comment type="similarity">
    <text evidence="1">Belongs to the DsbB family.</text>
</comment>